<organism>
    <name type="scientific">Trachelium caeruleum</name>
    <name type="common">Blue throatwort</name>
    <dbReference type="NCBI Taxonomy" id="28494"/>
    <lineage>
        <taxon>Eukaryota</taxon>
        <taxon>Viridiplantae</taxon>
        <taxon>Streptophyta</taxon>
        <taxon>Embryophyta</taxon>
        <taxon>Tracheophyta</taxon>
        <taxon>Spermatophyta</taxon>
        <taxon>Magnoliopsida</taxon>
        <taxon>eudicotyledons</taxon>
        <taxon>Gunneridae</taxon>
        <taxon>Pentapetalae</taxon>
        <taxon>asterids</taxon>
        <taxon>campanulids</taxon>
        <taxon>Asterales</taxon>
        <taxon>Campanulaceae</taxon>
        <taxon>Trachelium</taxon>
    </lineage>
</organism>
<reference key="1">
    <citation type="journal article" date="2007" name="Proc. Natl. Acad. Sci. U.S.A.">
        <title>Analysis of 81 genes from 64 plastid genomes resolves relationships in angiosperms and identifies genome-scale evolutionary patterns.</title>
        <authorList>
            <person name="Jansen R.K."/>
            <person name="Cai Z."/>
            <person name="Raubeson L.A."/>
            <person name="Daniell H."/>
            <person name="dePamphilis C.W."/>
            <person name="Leebens-Mack J."/>
            <person name="Muller K.F."/>
            <person name="Guisinger-Bellian M."/>
            <person name="Haberle R.C."/>
            <person name="Hansen A.K."/>
            <person name="Chumley T.W."/>
            <person name="Lee S.B."/>
            <person name="Peery R."/>
            <person name="McNeal J.R."/>
            <person name="Kuehl J.V."/>
            <person name="Boore J.L."/>
        </authorList>
    </citation>
    <scope>NUCLEOTIDE SEQUENCE [GENOMIC DNA]</scope>
</reference>
<reference key="2">
    <citation type="journal article" date="2008" name="J. Mol. Evol.">
        <title>Extensive rearrangements in the chloroplast genome of Trachelium caeruleum are associated with repeats and tRNA genes.</title>
        <authorList>
            <person name="Haberle R.C."/>
            <person name="Fourcade H.M."/>
            <person name="Boore J.L."/>
            <person name="Jansen R.K."/>
        </authorList>
    </citation>
    <scope>NUCLEOTIDE SEQUENCE [LARGE SCALE GENOMIC DNA]</scope>
</reference>
<gene>
    <name type="primary">ndhG</name>
</gene>
<feature type="chain" id="PRO_0000360294" description="NAD(P)H-quinone oxidoreductase subunit 6, chloroplastic">
    <location>
        <begin position="1"/>
        <end position="176"/>
    </location>
</feature>
<feature type="transmembrane region" description="Helical" evidence="2">
    <location>
        <begin position="10"/>
        <end position="30"/>
    </location>
</feature>
<feature type="transmembrane region" description="Helical" evidence="2">
    <location>
        <begin position="32"/>
        <end position="52"/>
    </location>
</feature>
<feature type="transmembrane region" description="Helical" evidence="2">
    <location>
        <begin position="61"/>
        <end position="81"/>
    </location>
</feature>
<feature type="transmembrane region" description="Helical" evidence="2">
    <location>
        <begin position="95"/>
        <end position="115"/>
    </location>
</feature>
<feature type="transmembrane region" description="Helical" evidence="2">
    <location>
        <begin position="152"/>
        <end position="172"/>
    </location>
</feature>
<name>NU6C_TRACE</name>
<accession>A9QC80</accession>
<proteinExistence type="inferred from homology"/>
<dbReference type="EC" id="7.1.1.-"/>
<dbReference type="EMBL" id="EU017266">
    <property type="protein sequence ID" value="ABU85673.1"/>
    <property type="molecule type" value="Genomic_DNA"/>
</dbReference>
<dbReference type="EMBL" id="EU090187">
    <property type="protein sequence ID" value="ABV26530.1"/>
    <property type="molecule type" value="Genomic_DNA"/>
</dbReference>
<dbReference type="EMBL" id="EU090187">
    <property type="protein sequence ID" value="ABV26537.1"/>
    <property type="molecule type" value="Genomic_DNA"/>
</dbReference>
<dbReference type="RefSeq" id="YP_001718705.1">
    <property type="nucleotide sequence ID" value="NC_010442.1"/>
</dbReference>
<dbReference type="RefSeq" id="YP_001718712.1">
    <property type="nucleotide sequence ID" value="NC_010442.1"/>
</dbReference>
<dbReference type="SMR" id="A9QC80"/>
<dbReference type="GeneID" id="6155906"/>
<dbReference type="GeneID" id="6155922"/>
<dbReference type="GO" id="GO:0009535">
    <property type="term" value="C:chloroplast thylakoid membrane"/>
    <property type="evidence" value="ECO:0007669"/>
    <property type="project" value="UniProtKB-SubCell"/>
</dbReference>
<dbReference type="GO" id="GO:0008137">
    <property type="term" value="F:NADH dehydrogenase (ubiquinone) activity"/>
    <property type="evidence" value="ECO:0007669"/>
    <property type="project" value="InterPro"/>
</dbReference>
<dbReference type="GO" id="GO:0048038">
    <property type="term" value="F:quinone binding"/>
    <property type="evidence" value="ECO:0007669"/>
    <property type="project" value="UniProtKB-KW"/>
</dbReference>
<dbReference type="FunFam" id="1.20.120.1200:FF:000002">
    <property type="entry name" value="NAD(P)H-quinone oxidoreductase subunit 6, chloroplastic"/>
    <property type="match status" value="1"/>
</dbReference>
<dbReference type="Gene3D" id="1.20.120.1200">
    <property type="entry name" value="NADH-ubiquinone/plastoquinone oxidoreductase chain 6, subunit NuoJ"/>
    <property type="match status" value="1"/>
</dbReference>
<dbReference type="InterPro" id="IPR050290">
    <property type="entry name" value="NAD(P)H-Q_Oxidoreduct_6"/>
</dbReference>
<dbReference type="InterPro" id="IPR001457">
    <property type="entry name" value="NADH_UbQ/plastoQ_OxRdtase_su6"/>
</dbReference>
<dbReference type="InterPro" id="IPR042106">
    <property type="entry name" value="Nuo/plastoQ_OxRdtase_6_NuoJ"/>
</dbReference>
<dbReference type="PANTHER" id="PTHR48479">
    <property type="entry name" value="NAD(P)H-QUINONE OXIDOREDUCTASE SUBUNIT 6, CHLOROPLASTIC"/>
    <property type="match status" value="1"/>
</dbReference>
<dbReference type="PANTHER" id="PTHR48479:SF1">
    <property type="entry name" value="NAD(P)H-QUINONE OXIDOREDUCTASE SUBUNIT 6, CHLOROPLASTIC"/>
    <property type="match status" value="1"/>
</dbReference>
<dbReference type="Pfam" id="PF00499">
    <property type="entry name" value="Oxidored_q3"/>
    <property type="match status" value="1"/>
</dbReference>
<protein>
    <recommendedName>
        <fullName>NAD(P)H-quinone oxidoreductase subunit 6, chloroplastic</fullName>
        <ecNumber>7.1.1.-</ecNumber>
    </recommendedName>
    <alternativeName>
        <fullName>NAD(P)H dehydrogenase subunit 6</fullName>
    </alternativeName>
    <alternativeName>
        <fullName>NADH-plastoquinone oxidoreductase subunit 6</fullName>
    </alternativeName>
</protein>
<geneLocation type="chloroplast"/>
<evidence type="ECO:0000250" key="1"/>
<evidence type="ECO:0000255" key="2"/>
<evidence type="ECO:0000305" key="3"/>
<comment type="function">
    <text evidence="1">NDH shuttles electrons from NAD(P)H:plastoquinone, via FMN and iron-sulfur (Fe-S) centers, to quinones in the photosynthetic chain and possibly in a chloroplast respiratory chain. The immediate electron acceptor for the enzyme in this species is believed to be plastoquinone. Couples the redox reaction to proton translocation, and thus conserves the redox energy in a proton gradient (By similarity).</text>
</comment>
<comment type="catalytic activity">
    <reaction>
        <text>a plastoquinone + NADH + (n+1) H(+)(in) = a plastoquinol + NAD(+) + n H(+)(out)</text>
        <dbReference type="Rhea" id="RHEA:42608"/>
        <dbReference type="Rhea" id="RHEA-COMP:9561"/>
        <dbReference type="Rhea" id="RHEA-COMP:9562"/>
        <dbReference type="ChEBI" id="CHEBI:15378"/>
        <dbReference type="ChEBI" id="CHEBI:17757"/>
        <dbReference type="ChEBI" id="CHEBI:57540"/>
        <dbReference type="ChEBI" id="CHEBI:57945"/>
        <dbReference type="ChEBI" id="CHEBI:62192"/>
    </reaction>
</comment>
<comment type="catalytic activity">
    <reaction>
        <text>a plastoquinone + NADPH + (n+1) H(+)(in) = a plastoquinol + NADP(+) + n H(+)(out)</text>
        <dbReference type="Rhea" id="RHEA:42612"/>
        <dbReference type="Rhea" id="RHEA-COMP:9561"/>
        <dbReference type="Rhea" id="RHEA-COMP:9562"/>
        <dbReference type="ChEBI" id="CHEBI:15378"/>
        <dbReference type="ChEBI" id="CHEBI:17757"/>
        <dbReference type="ChEBI" id="CHEBI:57783"/>
        <dbReference type="ChEBI" id="CHEBI:58349"/>
        <dbReference type="ChEBI" id="CHEBI:62192"/>
    </reaction>
</comment>
<comment type="subunit">
    <text evidence="1">NDH is composed of at least 16 different subunits, 5 of which are encoded in the nucleus.</text>
</comment>
<comment type="subcellular location">
    <subcellularLocation>
        <location evidence="1">Plastid</location>
        <location evidence="1">Chloroplast thylakoid membrane</location>
        <topology evidence="1">Multi-pass membrane protein</topology>
    </subcellularLocation>
</comment>
<comment type="similarity">
    <text evidence="3">Belongs to the complex I subunit 6 family.</text>
</comment>
<keyword id="KW-0150">Chloroplast</keyword>
<keyword id="KW-0472">Membrane</keyword>
<keyword id="KW-0520">NAD</keyword>
<keyword id="KW-0521">NADP</keyword>
<keyword id="KW-0934">Plastid</keyword>
<keyword id="KW-0618">Plastoquinone</keyword>
<keyword id="KW-0874">Quinone</keyword>
<keyword id="KW-0793">Thylakoid</keyword>
<keyword id="KW-1278">Translocase</keyword>
<keyword id="KW-0812">Transmembrane</keyword>
<keyword id="KW-1133">Transmembrane helix</keyword>
<keyword id="KW-0813">Transport</keyword>
<sequence length="176" mass="19106">MDLPGPIHDFILVFLGLVLILGGLAVVLLPNPIYSAFSLGLVLVCISLLYILSNSHFLAAAQLLIYVGAINVLIIFAVMFLNGSEYYKDLNPWTVGDGVTSVVCTSLFASLITTIPDTSWYGIIWTTKSNQIIEQDLINNSQEIGIHLSTDFLIPFELISIILLVALIGAIAVARQ</sequence>